<reference key="1">
    <citation type="submission" date="2008-03" db="EMBL/GenBank/DDBJ databases">
        <authorList>
            <consortium name="NIH - Xenopus Gene Collection (XGC) project"/>
        </authorList>
    </citation>
    <scope>NUCLEOTIDE SEQUENCE [LARGE SCALE MRNA]</scope>
</reference>
<reference key="2">
    <citation type="journal article" date="2006" name="PLoS Biol.">
        <title>Metazoan Scc4 homologs link sister chromatid cohesion to cell and axon migration guidance.</title>
        <authorList>
            <person name="Seitan V.C."/>
            <person name="Banks P."/>
            <person name="Laval S."/>
            <person name="Majid N.A."/>
            <person name="Dorsett D."/>
            <person name="Rana A."/>
            <person name="Smith J."/>
            <person name="Bateman A."/>
            <person name="Krpic S."/>
            <person name="Hostert A."/>
            <person name="Rollins R.A."/>
            <person name="Erdjument-Bromage H."/>
            <person name="Tempst P."/>
            <person name="Benard C.Y."/>
            <person name="Hekimi S."/>
            <person name="Newbury S.F."/>
            <person name="Strachan T."/>
        </authorList>
    </citation>
    <scope>DISRUPTION PHENOTYPE</scope>
</reference>
<protein>
    <recommendedName>
        <fullName>MAU2 chromatid cohesion factor homolog</fullName>
        <shortName>MAU-2</shortName>
    </recommendedName>
    <alternativeName>
        <fullName>Cohesin loading complex subunit SCC4 homolog</fullName>
    </alternativeName>
</protein>
<keyword id="KW-0131">Cell cycle</keyword>
<keyword id="KW-0132">Cell division</keyword>
<keyword id="KW-0159">Chromosome partition</keyword>
<keyword id="KW-0498">Mitosis</keyword>
<keyword id="KW-0539">Nucleus</keyword>
<keyword id="KW-1185">Reference proteome</keyword>
<keyword id="KW-0677">Repeat</keyword>
<keyword id="KW-0802">TPR repeat</keyword>
<comment type="function">
    <text evidence="2">Plays an important role in the loading of the cohesin complex on to DNA. Plays a role in sister chromatid cohesion and normal progression through prometaphase.</text>
</comment>
<comment type="subunit">
    <text evidence="1">Interacts with nipbl to form the cohesin loading complex.</text>
</comment>
<comment type="subcellular location">
    <subcellularLocation>
        <location evidence="2">Nucleus</location>
        <location evidence="2">Nucleoplasm</location>
    </subcellularLocation>
    <text evidence="2">Binds to chromatin from the end of mitosis until prophase.</text>
</comment>
<comment type="disruption phenotype">
    <text evidence="3">Early embryos exhibit numerous developmental defects including shortening of the A-P axis, ventralization, and defects in neural, somite, head, eye, and tail development.</text>
</comment>
<comment type="similarity">
    <text evidence="4">Belongs to the SCC4/mau-2 family.</text>
</comment>
<dbReference type="EMBL" id="BC160796">
    <property type="protein sequence ID" value="AAI60796.1"/>
    <property type="molecule type" value="mRNA"/>
</dbReference>
<dbReference type="FunCoup" id="B1H1Z8">
    <property type="interactions" value="4320"/>
</dbReference>
<dbReference type="STRING" id="8364.ENSXETP00000007320"/>
<dbReference type="PaxDb" id="8364-ENSXETP00000058524"/>
<dbReference type="eggNOG" id="KOG2300">
    <property type="taxonomic scope" value="Eukaryota"/>
</dbReference>
<dbReference type="HOGENOM" id="CLU_030238_0_0_1"/>
<dbReference type="InParanoid" id="B1H1Z8"/>
<dbReference type="OrthoDB" id="5565328at2759"/>
<dbReference type="Proteomes" id="UP000008143">
    <property type="component" value="Unplaced"/>
</dbReference>
<dbReference type="GO" id="GO:0000785">
    <property type="term" value="C:chromatin"/>
    <property type="evidence" value="ECO:0000250"/>
    <property type="project" value="UniProtKB"/>
</dbReference>
<dbReference type="GO" id="GO:0005654">
    <property type="term" value="C:nucleoplasm"/>
    <property type="evidence" value="ECO:0000250"/>
    <property type="project" value="UniProtKB"/>
</dbReference>
<dbReference type="GO" id="GO:0005634">
    <property type="term" value="C:nucleus"/>
    <property type="evidence" value="ECO:0000250"/>
    <property type="project" value="UniProtKB"/>
</dbReference>
<dbReference type="GO" id="GO:0090694">
    <property type="term" value="C:Scc2-Scc4 cohesin loading complex"/>
    <property type="evidence" value="ECO:0000250"/>
    <property type="project" value="UniProtKB"/>
</dbReference>
<dbReference type="GO" id="GO:0032116">
    <property type="term" value="C:SMC loading complex"/>
    <property type="evidence" value="ECO:0000250"/>
    <property type="project" value="UniProtKB"/>
</dbReference>
<dbReference type="GO" id="GO:0051301">
    <property type="term" value="P:cell division"/>
    <property type="evidence" value="ECO:0007669"/>
    <property type="project" value="UniProtKB-KW"/>
</dbReference>
<dbReference type="GO" id="GO:0007059">
    <property type="term" value="P:chromosome segregation"/>
    <property type="evidence" value="ECO:0007669"/>
    <property type="project" value="UniProtKB-KW"/>
</dbReference>
<dbReference type="GO" id="GO:0034088">
    <property type="term" value="P:maintenance of mitotic sister chromatid cohesion"/>
    <property type="evidence" value="ECO:0000250"/>
    <property type="project" value="UniProtKB"/>
</dbReference>
<dbReference type="GO" id="GO:0007064">
    <property type="term" value="P:mitotic sister chromatid cohesion"/>
    <property type="evidence" value="ECO:0000250"/>
    <property type="project" value="UniProtKB"/>
</dbReference>
<dbReference type="FunFam" id="1.25.40.10:FF:000216">
    <property type="entry name" value="MAU2 chromatid cohesion factor homolog"/>
    <property type="match status" value="1"/>
</dbReference>
<dbReference type="Gene3D" id="1.25.40.10">
    <property type="entry name" value="Tetratricopeptide repeat domain"/>
    <property type="match status" value="2"/>
</dbReference>
<dbReference type="InterPro" id="IPR019440">
    <property type="entry name" value="MAU2"/>
</dbReference>
<dbReference type="InterPro" id="IPR011990">
    <property type="entry name" value="TPR-like_helical_dom_sf"/>
</dbReference>
<dbReference type="PANTHER" id="PTHR21394">
    <property type="entry name" value="MAU2 CHROMATID COHESION FACTOR HOMOLOG"/>
    <property type="match status" value="1"/>
</dbReference>
<dbReference type="Pfam" id="PF10345">
    <property type="entry name" value="Cohesin_load"/>
    <property type="match status" value="1"/>
</dbReference>
<dbReference type="SUPFAM" id="SSF48452">
    <property type="entry name" value="TPR-like"/>
    <property type="match status" value="2"/>
</dbReference>
<organism>
    <name type="scientific">Xenopus tropicalis</name>
    <name type="common">Western clawed frog</name>
    <name type="synonym">Silurana tropicalis</name>
    <dbReference type="NCBI Taxonomy" id="8364"/>
    <lineage>
        <taxon>Eukaryota</taxon>
        <taxon>Metazoa</taxon>
        <taxon>Chordata</taxon>
        <taxon>Craniata</taxon>
        <taxon>Vertebrata</taxon>
        <taxon>Euteleostomi</taxon>
        <taxon>Amphibia</taxon>
        <taxon>Batrachia</taxon>
        <taxon>Anura</taxon>
        <taxon>Pipoidea</taxon>
        <taxon>Pipidae</taxon>
        <taxon>Xenopodinae</taxon>
        <taxon>Xenopus</taxon>
        <taxon>Silurana</taxon>
    </lineage>
</organism>
<accession>B1H1Z8</accession>
<sequence>MAATAVVAPQAEASESWYLALLGFAEHFRTSSPPKIRLCVHCLQAVFQFKPSQRIEARTHLQLGSVLYHHTKNSELARQHLEKAWLISQQIPQFEDVKFEAASLLSELYCQENSVDAAKPLLRKAIQISQQTPYWHCRLLFQLAQLHTLEKDLVSACDLLGVGAEYARVVGSEYTRALFLLSKGMLLLMERKLQEVHPLLTLCGQIVENWQGNPIQKESLRVFFLVLQVTHYLDAGQVKSVKPCLKQLQQCIQTISTLHDDEILPSNPADLFHWLPKEHMCVLVYLVTVMHSMQAGYLEKAQKYTDKALMQLEKLKMLDSSPILSSFQVILLEHIIMCRLVTGHKATALQEISQVCQLCQQSPRLFSNHAAQLHTLLGLYCISVNCMDNAEAQFTTALRLTTHQELWTFIVTNLASVYIREGNRHQELYSLLERINPDHNFPVSSHCLRAAAFYIRGLFSFFQGRYNEAKRFLRETLKMSNAEDLNRLTACSLVLLGHIFYVLGNHRESNNMVVPAMQLASKIPDMSVQLWSSALLRDLNKACGNNIDAHEAAQMHQNFSQQLLQDHIEACSLPEHNLITWTDGSPPVQFQAQNGPTTSLASLL</sequence>
<proteinExistence type="evidence at transcript level"/>
<feature type="chain" id="PRO_0000382725" description="MAU2 chromatid cohesion factor homolog">
    <location>
        <begin position="1"/>
        <end position="604"/>
    </location>
</feature>
<feature type="repeat" description="TPR 1">
    <location>
        <begin position="99"/>
        <end position="132"/>
    </location>
</feature>
<feature type="repeat" description="TPR 2">
    <location>
        <begin position="371"/>
        <end position="404"/>
    </location>
</feature>
<feature type="repeat" description="TPR 3">
    <location>
        <begin position="450"/>
        <end position="483"/>
    </location>
</feature>
<feature type="repeat" description="TPR 4">
    <location>
        <begin position="490"/>
        <end position="523"/>
    </location>
</feature>
<evidence type="ECO:0000250" key="1">
    <source>
        <dbReference type="UniProtKB" id="B4ZIX8"/>
    </source>
</evidence>
<evidence type="ECO:0000250" key="2">
    <source>
        <dbReference type="UniProtKB" id="Q9Y6X3"/>
    </source>
</evidence>
<evidence type="ECO:0000269" key="3">
    <source>
    </source>
</evidence>
<evidence type="ECO:0000305" key="4"/>
<name>SCC4_XENTR</name>
<gene>
    <name type="primary">mau2</name>
</gene>